<protein>
    <recommendedName>
        <fullName evidence="1">Phosphate import ATP-binding protein PstB 2</fullName>
        <ecNumber evidence="1">7.3.2.1</ecNumber>
    </recommendedName>
    <alternativeName>
        <fullName evidence="1">ABC phosphate transporter 2</fullName>
    </alternativeName>
    <alternativeName>
        <fullName evidence="1">Phosphate-transporting ATPase 2</fullName>
    </alternativeName>
</protein>
<keyword id="KW-0067">ATP-binding</keyword>
<keyword id="KW-1003">Cell membrane</keyword>
<keyword id="KW-0472">Membrane</keyword>
<keyword id="KW-0547">Nucleotide-binding</keyword>
<keyword id="KW-0592">Phosphate transport</keyword>
<keyword id="KW-1185">Reference proteome</keyword>
<keyword id="KW-1278">Translocase</keyword>
<keyword id="KW-0813">Transport</keyword>
<feature type="chain" id="PRO_0000092781" description="Phosphate import ATP-binding protein PstB 2">
    <location>
        <begin position="1"/>
        <end position="269"/>
    </location>
</feature>
<feature type="domain" description="ABC transporter" evidence="1">
    <location>
        <begin position="23"/>
        <end position="264"/>
    </location>
</feature>
<feature type="binding site" evidence="1">
    <location>
        <begin position="55"/>
        <end position="62"/>
    </location>
    <ligand>
        <name>ATP</name>
        <dbReference type="ChEBI" id="CHEBI:30616"/>
    </ligand>
</feature>
<accession>P46341</accession>
<sequence length="269" mass="30003">MSEQMVKEKPERAVIVPKQNHVLEVKDLSIYYGNKQAVHHVNMDIEKNAVTALIGPSGCGKSTFLRNINRMNDLIPSARAEGEILYEGLNILGGNINVVSLRREIGMVFQKPNPFPKSIYANITHALKYAGERNKAVLDEIVEESLTKAALWDEVKDRLHSSALSLSGGQQQRLCIARTLAMKPAVLLLDEPASALDPISNAKIEELITGLKREYSIIIVTHNMQQALRVSDRTAFFLNGELVEYGQTEQIFTSPKKQKTEDYINGKFG</sequence>
<evidence type="ECO:0000255" key="1">
    <source>
        <dbReference type="HAMAP-Rule" id="MF_01702"/>
    </source>
</evidence>
<name>PSTB2_BACSU</name>
<reference key="1">
    <citation type="journal article" date="1996" name="Microbiology">
        <title>A Bacillus subtilis gene cluster similar to the Escherichia coli phosphate-specific transport (pst) operon: evidence for a tandemly arranged pstB gene.</title>
        <authorList>
            <person name="Takemaru K."/>
            <person name="Mizuno M."/>
            <person name="Kobayashi Y."/>
        </authorList>
    </citation>
    <scope>NUCLEOTIDE SEQUENCE [GENOMIC DNA]</scope>
    <source>
        <strain>168 / JH642</strain>
    </source>
</reference>
<reference key="2">
    <citation type="journal article" date="1996" name="Microbiology">
        <title>Systematic sequencing of the 283 kb 210 degrees-232 degrees region of the Bacillus subtilis genome containing the skin element and many sporulation genes.</title>
        <authorList>
            <person name="Mizuno M."/>
            <person name="Masuda S."/>
            <person name="Takemaru K."/>
            <person name="Hosono S."/>
            <person name="Sato T."/>
            <person name="Takeuchi M."/>
            <person name="Kobayashi Y."/>
        </authorList>
    </citation>
    <scope>NUCLEOTIDE SEQUENCE [GENOMIC DNA]</scope>
    <source>
        <strain>168 / JH642</strain>
    </source>
</reference>
<reference key="3">
    <citation type="journal article" date="1997" name="Nature">
        <title>The complete genome sequence of the Gram-positive bacterium Bacillus subtilis.</title>
        <authorList>
            <person name="Kunst F."/>
            <person name="Ogasawara N."/>
            <person name="Moszer I."/>
            <person name="Albertini A.M."/>
            <person name="Alloni G."/>
            <person name="Azevedo V."/>
            <person name="Bertero M.G."/>
            <person name="Bessieres P."/>
            <person name="Bolotin A."/>
            <person name="Borchert S."/>
            <person name="Borriss R."/>
            <person name="Boursier L."/>
            <person name="Brans A."/>
            <person name="Braun M."/>
            <person name="Brignell S.C."/>
            <person name="Bron S."/>
            <person name="Brouillet S."/>
            <person name="Bruschi C.V."/>
            <person name="Caldwell B."/>
            <person name="Capuano V."/>
            <person name="Carter N.M."/>
            <person name="Choi S.-K."/>
            <person name="Codani J.-J."/>
            <person name="Connerton I.F."/>
            <person name="Cummings N.J."/>
            <person name="Daniel R.A."/>
            <person name="Denizot F."/>
            <person name="Devine K.M."/>
            <person name="Duesterhoeft A."/>
            <person name="Ehrlich S.D."/>
            <person name="Emmerson P.T."/>
            <person name="Entian K.-D."/>
            <person name="Errington J."/>
            <person name="Fabret C."/>
            <person name="Ferrari E."/>
            <person name="Foulger D."/>
            <person name="Fritz C."/>
            <person name="Fujita M."/>
            <person name="Fujita Y."/>
            <person name="Fuma S."/>
            <person name="Galizzi A."/>
            <person name="Galleron N."/>
            <person name="Ghim S.-Y."/>
            <person name="Glaser P."/>
            <person name="Goffeau A."/>
            <person name="Golightly E.J."/>
            <person name="Grandi G."/>
            <person name="Guiseppi G."/>
            <person name="Guy B.J."/>
            <person name="Haga K."/>
            <person name="Haiech J."/>
            <person name="Harwood C.R."/>
            <person name="Henaut A."/>
            <person name="Hilbert H."/>
            <person name="Holsappel S."/>
            <person name="Hosono S."/>
            <person name="Hullo M.-F."/>
            <person name="Itaya M."/>
            <person name="Jones L.-M."/>
            <person name="Joris B."/>
            <person name="Karamata D."/>
            <person name="Kasahara Y."/>
            <person name="Klaerr-Blanchard M."/>
            <person name="Klein C."/>
            <person name="Kobayashi Y."/>
            <person name="Koetter P."/>
            <person name="Koningstein G."/>
            <person name="Krogh S."/>
            <person name="Kumano M."/>
            <person name="Kurita K."/>
            <person name="Lapidus A."/>
            <person name="Lardinois S."/>
            <person name="Lauber J."/>
            <person name="Lazarevic V."/>
            <person name="Lee S.-M."/>
            <person name="Levine A."/>
            <person name="Liu H."/>
            <person name="Masuda S."/>
            <person name="Mauel C."/>
            <person name="Medigue C."/>
            <person name="Medina N."/>
            <person name="Mellado R.P."/>
            <person name="Mizuno M."/>
            <person name="Moestl D."/>
            <person name="Nakai S."/>
            <person name="Noback M."/>
            <person name="Noone D."/>
            <person name="O'Reilly M."/>
            <person name="Ogawa K."/>
            <person name="Ogiwara A."/>
            <person name="Oudega B."/>
            <person name="Park S.-H."/>
            <person name="Parro V."/>
            <person name="Pohl T.M."/>
            <person name="Portetelle D."/>
            <person name="Porwollik S."/>
            <person name="Prescott A.M."/>
            <person name="Presecan E."/>
            <person name="Pujic P."/>
            <person name="Purnelle B."/>
            <person name="Rapoport G."/>
            <person name="Rey M."/>
            <person name="Reynolds S."/>
            <person name="Rieger M."/>
            <person name="Rivolta C."/>
            <person name="Rocha E."/>
            <person name="Roche B."/>
            <person name="Rose M."/>
            <person name="Sadaie Y."/>
            <person name="Sato T."/>
            <person name="Scanlan E."/>
            <person name="Schleich S."/>
            <person name="Schroeter R."/>
            <person name="Scoffone F."/>
            <person name="Sekiguchi J."/>
            <person name="Sekowska A."/>
            <person name="Seror S.J."/>
            <person name="Serror P."/>
            <person name="Shin B.-S."/>
            <person name="Soldo B."/>
            <person name="Sorokin A."/>
            <person name="Tacconi E."/>
            <person name="Takagi T."/>
            <person name="Takahashi H."/>
            <person name="Takemaru K."/>
            <person name="Takeuchi M."/>
            <person name="Tamakoshi A."/>
            <person name="Tanaka T."/>
            <person name="Terpstra P."/>
            <person name="Tognoni A."/>
            <person name="Tosato V."/>
            <person name="Uchiyama S."/>
            <person name="Vandenbol M."/>
            <person name="Vannier F."/>
            <person name="Vassarotti A."/>
            <person name="Viari A."/>
            <person name="Wambutt R."/>
            <person name="Wedler E."/>
            <person name="Wedler H."/>
            <person name="Weitzenegger T."/>
            <person name="Winters P."/>
            <person name="Wipat A."/>
            <person name="Yamamoto H."/>
            <person name="Yamane K."/>
            <person name="Yasumoto K."/>
            <person name="Yata K."/>
            <person name="Yoshida K."/>
            <person name="Yoshikawa H.-F."/>
            <person name="Zumstein E."/>
            <person name="Yoshikawa H."/>
            <person name="Danchin A."/>
        </authorList>
    </citation>
    <scope>NUCLEOTIDE SEQUENCE [LARGE SCALE GENOMIC DNA]</scope>
    <source>
        <strain>168</strain>
    </source>
</reference>
<organism>
    <name type="scientific">Bacillus subtilis (strain 168)</name>
    <dbReference type="NCBI Taxonomy" id="224308"/>
    <lineage>
        <taxon>Bacteria</taxon>
        <taxon>Bacillati</taxon>
        <taxon>Bacillota</taxon>
        <taxon>Bacilli</taxon>
        <taxon>Bacillales</taxon>
        <taxon>Bacillaceae</taxon>
        <taxon>Bacillus</taxon>
    </lineage>
</organism>
<dbReference type="EC" id="7.3.2.1" evidence="1"/>
<dbReference type="EMBL" id="D58414">
    <property type="protein sequence ID" value="BAA09584.1"/>
    <property type="molecule type" value="Genomic_DNA"/>
</dbReference>
<dbReference type="EMBL" id="D84432">
    <property type="protein sequence ID" value="BAA12513.1"/>
    <property type="molecule type" value="Genomic_DNA"/>
</dbReference>
<dbReference type="EMBL" id="AL009126">
    <property type="protein sequence ID" value="CAB14426.1"/>
    <property type="molecule type" value="Genomic_DNA"/>
</dbReference>
<dbReference type="PIR" id="D69956">
    <property type="entry name" value="D69956"/>
</dbReference>
<dbReference type="RefSeq" id="NP_390375.1">
    <property type="nucleotide sequence ID" value="NC_000964.3"/>
</dbReference>
<dbReference type="SMR" id="P46341"/>
<dbReference type="FunCoup" id="P46341">
    <property type="interactions" value="272"/>
</dbReference>
<dbReference type="STRING" id="224308.BSU24960"/>
<dbReference type="PaxDb" id="224308-BSU24960"/>
<dbReference type="EnsemblBacteria" id="CAB14426">
    <property type="protein sequence ID" value="CAB14426"/>
    <property type="gene ID" value="BSU_24960"/>
</dbReference>
<dbReference type="GeneID" id="938198"/>
<dbReference type="KEGG" id="bsu:BSU24960"/>
<dbReference type="PATRIC" id="fig|224308.179.peg.2715"/>
<dbReference type="eggNOG" id="COG1117">
    <property type="taxonomic scope" value="Bacteria"/>
</dbReference>
<dbReference type="InParanoid" id="P46341"/>
<dbReference type="OrthoDB" id="9802185at2"/>
<dbReference type="PhylomeDB" id="P46341"/>
<dbReference type="BioCyc" id="BSUB:BSU24960-MONOMER"/>
<dbReference type="Proteomes" id="UP000001570">
    <property type="component" value="Chromosome"/>
</dbReference>
<dbReference type="GO" id="GO:0005886">
    <property type="term" value="C:plasma membrane"/>
    <property type="evidence" value="ECO:0007669"/>
    <property type="project" value="UniProtKB-SubCell"/>
</dbReference>
<dbReference type="GO" id="GO:0005524">
    <property type="term" value="F:ATP binding"/>
    <property type="evidence" value="ECO:0007669"/>
    <property type="project" value="UniProtKB-KW"/>
</dbReference>
<dbReference type="GO" id="GO:0016887">
    <property type="term" value="F:ATP hydrolysis activity"/>
    <property type="evidence" value="ECO:0007669"/>
    <property type="project" value="InterPro"/>
</dbReference>
<dbReference type="GO" id="GO:0015415">
    <property type="term" value="F:ATPase-coupled phosphate ion transmembrane transporter activity"/>
    <property type="evidence" value="ECO:0007669"/>
    <property type="project" value="UniProtKB-EC"/>
</dbReference>
<dbReference type="GO" id="GO:0035435">
    <property type="term" value="P:phosphate ion transmembrane transport"/>
    <property type="evidence" value="ECO:0007669"/>
    <property type="project" value="InterPro"/>
</dbReference>
<dbReference type="CDD" id="cd03260">
    <property type="entry name" value="ABC_PstB_phosphate_transporter"/>
    <property type="match status" value="1"/>
</dbReference>
<dbReference type="Gene3D" id="3.40.50.300">
    <property type="entry name" value="P-loop containing nucleotide triphosphate hydrolases"/>
    <property type="match status" value="1"/>
</dbReference>
<dbReference type="InterPro" id="IPR003593">
    <property type="entry name" value="AAA+_ATPase"/>
</dbReference>
<dbReference type="InterPro" id="IPR003439">
    <property type="entry name" value="ABC_transporter-like_ATP-bd"/>
</dbReference>
<dbReference type="InterPro" id="IPR017871">
    <property type="entry name" value="ABC_transporter-like_CS"/>
</dbReference>
<dbReference type="InterPro" id="IPR027417">
    <property type="entry name" value="P-loop_NTPase"/>
</dbReference>
<dbReference type="InterPro" id="IPR005670">
    <property type="entry name" value="PstB-like"/>
</dbReference>
<dbReference type="NCBIfam" id="TIGR00972">
    <property type="entry name" value="3a0107s01c2"/>
    <property type="match status" value="1"/>
</dbReference>
<dbReference type="PANTHER" id="PTHR43423">
    <property type="entry name" value="ABC TRANSPORTER I FAMILY MEMBER 17"/>
    <property type="match status" value="1"/>
</dbReference>
<dbReference type="PANTHER" id="PTHR43423:SF1">
    <property type="entry name" value="ABC TRANSPORTER I FAMILY MEMBER 17"/>
    <property type="match status" value="1"/>
</dbReference>
<dbReference type="Pfam" id="PF00005">
    <property type="entry name" value="ABC_tran"/>
    <property type="match status" value="1"/>
</dbReference>
<dbReference type="SMART" id="SM00382">
    <property type="entry name" value="AAA"/>
    <property type="match status" value="1"/>
</dbReference>
<dbReference type="SUPFAM" id="SSF52540">
    <property type="entry name" value="P-loop containing nucleoside triphosphate hydrolases"/>
    <property type="match status" value="1"/>
</dbReference>
<dbReference type="PROSITE" id="PS00211">
    <property type="entry name" value="ABC_TRANSPORTER_1"/>
    <property type="match status" value="1"/>
</dbReference>
<dbReference type="PROSITE" id="PS50893">
    <property type="entry name" value="ABC_TRANSPORTER_2"/>
    <property type="match status" value="1"/>
</dbReference>
<dbReference type="PROSITE" id="PS51238">
    <property type="entry name" value="PSTB"/>
    <property type="match status" value="1"/>
</dbReference>
<gene>
    <name evidence="1" type="primary">pstB2</name>
    <name type="synonym">pstBA</name>
    <name type="synonym">yqgJ</name>
    <name type="synonym">yzmE</name>
    <name type="ordered locus">BSU24960</name>
</gene>
<proteinExistence type="inferred from homology"/>
<comment type="function">
    <text evidence="1">Part of the ABC transporter complex PstSACB involved in phosphate import. Responsible for energy coupling to the transport system.</text>
</comment>
<comment type="catalytic activity">
    <reaction evidence="1">
        <text>phosphate(out) + ATP + H2O = ADP + 2 phosphate(in) + H(+)</text>
        <dbReference type="Rhea" id="RHEA:24440"/>
        <dbReference type="ChEBI" id="CHEBI:15377"/>
        <dbReference type="ChEBI" id="CHEBI:15378"/>
        <dbReference type="ChEBI" id="CHEBI:30616"/>
        <dbReference type="ChEBI" id="CHEBI:43474"/>
        <dbReference type="ChEBI" id="CHEBI:456216"/>
        <dbReference type="EC" id="7.3.2.1"/>
    </reaction>
</comment>
<comment type="subunit">
    <text evidence="1">The complex is composed of two ATP-binding proteins (PstB), two transmembrane proteins (PstC and PstA) and a solute-binding protein (PstS).</text>
</comment>
<comment type="subcellular location">
    <subcellularLocation>
        <location evidence="1">Cell membrane</location>
        <topology evidence="1">Peripheral membrane protein</topology>
    </subcellularLocation>
</comment>
<comment type="similarity">
    <text evidence="1">Belongs to the ABC transporter superfamily. Phosphate importer (TC 3.A.1.7) family.</text>
</comment>